<evidence type="ECO:0000255" key="1">
    <source>
        <dbReference type="HAMAP-Rule" id="MF_00137"/>
    </source>
</evidence>
<feature type="chain" id="PRO_1000018773" description="Phosphoribosylaminoimidazole-succinocarboxamide synthase">
    <location>
        <begin position="1"/>
        <end position="253"/>
    </location>
</feature>
<sequence length="253" mass="28514">MARRKKIYEGKAKILYEGPEPGTIVQYFKDDATAFNAEKKAVIEGKGVLNNRLSEFFMTGLGHIGVPTHFIKRLNMREQLVRSVDIIPLEIIVRNYAAGTMSKRLGLEEGTQLPRPIVEYCYKDDKLGDPLVTEEHIAAFGWASQQDMDDMLSLALRVNDFLSGLMFGVGIRLVDFKIEVGRVYDGDFQRLVVADEISPDSCRLWDIESGRKLDKDVFRRDLGDLADAYTEVAQRLGVMPKNATPITKPTLIN</sequence>
<proteinExistence type="inferred from homology"/>
<protein>
    <recommendedName>
        <fullName evidence="1">Phosphoribosylaminoimidazole-succinocarboxamide synthase</fullName>
        <ecNumber evidence="1">6.3.2.6</ecNumber>
    </recommendedName>
    <alternativeName>
        <fullName evidence="1">SAICAR synthetase</fullName>
    </alternativeName>
</protein>
<gene>
    <name evidence="1" type="primary">purC</name>
    <name type="ordered locus">RD1_2262</name>
</gene>
<dbReference type="EC" id="6.3.2.6" evidence="1"/>
<dbReference type="EMBL" id="CP000362">
    <property type="protein sequence ID" value="ABG31848.1"/>
    <property type="molecule type" value="Genomic_DNA"/>
</dbReference>
<dbReference type="RefSeq" id="WP_011568465.1">
    <property type="nucleotide sequence ID" value="NC_008209.1"/>
</dbReference>
<dbReference type="SMR" id="Q167J5"/>
<dbReference type="STRING" id="375451.RD1_2262"/>
<dbReference type="KEGG" id="rde:RD1_2262"/>
<dbReference type="eggNOG" id="COG0152">
    <property type="taxonomic scope" value="Bacteria"/>
</dbReference>
<dbReference type="HOGENOM" id="CLU_061495_2_0_5"/>
<dbReference type="OrthoDB" id="9801549at2"/>
<dbReference type="UniPathway" id="UPA00074">
    <property type="reaction ID" value="UER00131"/>
</dbReference>
<dbReference type="Proteomes" id="UP000007029">
    <property type="component" value="Chromosome"/>
</dbReference>
<dbReference type="GO" id="GO:0005829">
    <property type="term" value="C:cytosol"/>
    <property type="evidence" value="ECO:0007669"/>
    <property type="project" value="TreeGrafter"/>
</dbReference>
<dbReference type="GO" id="GO:0005524">
    <property type="term" value="F:ATP binding"/>
    <property type="evidence" value="ECO:0007669"/>
    <property type="project" value="UniProtKB-KW"/>
</dbReference>
<dbReference type="GO" id="GO:0004639">
    <property type="term" value="F:phosphoribosylaminoimidazolesuccinocarboxamide synthase activity"/>
    <property type="evidence" value="ECO:0007669"/>
    <property type="project" value="UniProtKB-UniRule"/>
</dbReference>
<dbReference type="GO" id="GO:0006189">
    <property type="term" value="P:'de novo' IMP biosynthetic process"/>
    <property type="evidence" value="ECO:0007669"/>
    <property type="project" value="UniProtKB-UniRule"/>
</dbReference>
<dbReference type="GO" id="GO:0009236">
    <property type="term" value="P:cobalamin biosynthetic process"/>
    <property type="evidence" value="ECO:0007669"/>
    <property type="project" value="InterPro"/>
</dbReference>
<dbReference type="CDD" id="cd01415">
    <property type="entry name" value="SAICAR_synt_PurC"/>
    <property type="match status" value="1"/>
</dbReference>
<dbReference type="FunFam" id="3.30.470.20:FF:000006">
    <property type="entry name" value="Phosphoribosylaminoimidazole-succinocarboxamide synthase"/>
    <property type="match status" value="1"/>
</dbReference>
<dbReference type="Gene3D" id="3.30.470.20">
    <property type="entry name" value="ATP-grasp fold, B domain"/>
    <property type="match status" value="1"/>
</dbReference>
<dbReference type="Gene3D" id="3.30.200.20">
    <property type="entry name" value="Phosphorylase Kinase, domain 1"/>
    <property type="match status" value="1"/>
</dbReference>
<dbReference type="HAMAP" id="MF_00137">
    <property type="entry name" value="SAICAR_synth"/>
    <property type="match status" value="1"/>
</dbReference>
<dbReference type="InterPro" id="IPR028923">
    <property type="entry name" value="SAICAR_synt/ADE2_N"/>
</dbReference>
<dbReference type="InterPro" id="IPR033934">
    <property type="entry name" value="SAICAR_synt_PurC"/>
</dbReference>
<dbReference type="InterPro" id="IPR001636">
    <property type="entry name" value="SAICAR_synth"/>
</dbReference>
<dbReference type="InterPro" id="IPR050089">
    <property type="entry name" value="SAICAR_synthetase"/>
</dbReference>
<dbReference type="InterPro" id="IPR018236">
    <property type="entry name" value="SAICAR_synthetase_CS"/>
</dbReference>
<dbReference type="NCBIfam" id="TIGR00081">
    <property type="entry name" value="purC"/>
    <property type="match status" value="1"/>
</dbReference>
<dbReference type="PANTHER" id="PTHR43599">
    <property type="entry name" value="MULTIFUNCTIONAL PROTEIN ADE2"/>
    <property type="match status" value="1"/>
</dbReference>
<dbReference type="PANTHER" id="PTHR43599:SF3">
    <property type="entry name" value="SI:DKEY-6E2.2"/>
    <property type="match status" value="1"/>
</dbReference>
<dbReference type="Pfam" id="PF01259">
    <property type="entry name" value="SAICAR_synt"/>
    <property type="match status" value="1"/>
</dbReference>
<dbReference type="SUPFAM" id="SSF56104">
    <property type="entry name" value="SAICAR synthase-like"/>
    <property type="match status" value="1"/>
</dbReference>
<dbReference type="PROSITE" id="PS01057">
    <property type="entry name" value="SAICAR_SYNTHETASE_1"/>
    <property type="match status" value="1"/>
</dbReference>
<accession>Q167J5</accession>
<reference key="1">
    <citation type="journal article" date="2007" name="J. Bacteriol.">
        <title>The complete genome sequence of Roseobacter denitrificans reveals a mixotrophic rather than photosynthetic metabolism.</title>
        <authorList>
            <person name="Swingley W.D."/>
            <person name="Sadekar S."/>
            <person name="Mastrian S.D."/>
            <person name="Matthies H.J."/>
            <person name="Hao J."/>
            <person name="Ramos H."/>
            <person name="Acharya C.R."/>
            <person name="Conrad A.L."/>
            <person name="Taylor H.L."/>
            <person name="Dejesa L.C."/>
            <person name="Shah M.K."/>
            <person name="O'Huallachain M.E."/>
            <person name="Lince M.T."/>
            <person name="Blankenship R.E."/>
            <person name="Beatty J.T."/>
            <person name="Touchman J.W."/>
        </authorList>
    </citation>
    <scope>NUCLEOTIDE SEQUENCE [LARGE SCALE GENOMIC DNA]</scope>
    <source>
        <strain>ATCC 33942 / OCh 114</strain>
    </source>
</reference>
<keyword id="KW-0067">ATP-binding</keyword>
<keyword id="KW-0436">Ligase</keyword>
<keyword id="KW-0547">Nucleotide-binding</keyword>
<keyword id="KW-0658">Purine biosynthesis</keyword>
<keyword id="KW-1185">Reference proteome</keyword>
<name>PUR7_ROSDO</name>
<comment type="catalytic activity">
    <reaction evidence="1">
        <text>5-amino-1-(5-phospho-D-ribosyl)imidazole-4-carboxylate + L-aspartate + ATP = (2S)-2-[5-amino-1-(5-phospho-beta-D-ribosyl)imidazole-4-carboxamido]succinate + ADP + phosphate + 2 H(+)</text>
        <dbReference type="Rhea" id="RHEA:22628"/>
        <dbReference type="ChEBI" id="CHEBI:15378"/>
        <dbReference type="ChEBI" id="CHEBI:29991"/>
        <dbReference type="ChEBI" id="CHEBI:30616"/>
        <dbReference type="ChEBI" id="CHEBI:43474"/>
        <dbReference type="ChEBI" id="CHEBI:58443"/>
        <dbReference type="ChEBI" id="CHEBI:77657"/>
        <dbReference type="ChEBI" id="CHEBI:456216"/>
        <dbReference type="EC" id="6.3.2.6"/>
    </reaction>
</comment>
<comment type="pathway">
    <text evidence="1">Purine metabolism; IMP biosynthesis via de novo pathway; 5-amino-1-(5-phospho-D-ribosyl)imidazole-4-carboxamide from 5-amino-1-(5-phospho-D-ribosyl)imidazole-4-carboxylate: step 1/2.</text>
</comment>
<comment type="similarity">
    <text evidence="1">Belongs to the SAICAR synthetase family.</text>
</comment>
<organism>
    <name type="scientific">Roseobacter denitrificans (strain ATCC 33942 / OCh 114)</name>
    <name type="common">Erythrobacter sp. (strain OCh 114)</name>
    <name type="synonym">Roseobacter denitrificans</name>
    <dbReference type="NCBI Taxonomy" id="375451"/>
    <lineage>
        <taxon>Bacteria</taxon>
        <taxon>Pseudomonadati</taxon>
        <taxon>Pseudomonadota</taxon>
        <taxon>Alphaproteobacteria</taxon>
        <taxon>Rhodobacterales</taxon>
        <taxon>Roseobacteraceae</taxon>
        <taxon>Roseobacter</taxon>
    </lineage>
</organism>